<evidence type="ECO:0000250" key="1"/>
<evidence type="ECO:0000255" key="2">
    <source>
        <dbReference type="PROSITE-ProRule" id="PRU10001"/>
    </source>
</evidence>
<evidence type="ECO:0000305" key="3"/>
<name>FABG_STAAN</name>
<reference key="1">
    <citation type="journal article" date="2001" name="Antimicrob. Agents Chemother.">
        <title>Eagle-type methicillin resistance: new phenotype of high methicillin resistance under mec regulator gene control.</title>
        <authorList>
            <person name="Kondo N."/>
            <person name="Kuwahara-Arai K."/>
            <person name="Kuroda-Murakami H."/>
            <person name="Tateda-Suzuki E."/>
            <person name="Hiramatsu K."/>
        </authorList>
    </citation>
    <scope>NUCLEOTIDE SEQUENCE [GENOMIC DNA]</scope>
</reference>
<reference key="2">
    <citation type="journal article" date="2001" name="Lancet">
        <title>Whole genome sequencing of meticillin-resistant Staphylococcus aureus.</title>
        <authorList>
            <person name="Kuroda M."/>
            <person name="Ohta T."/>
            <person name="Uchiyama I."/>
            <person name="Baba T."/>
            <person name="Yuzawa H."/>
            <person name="Kobayashi I."/>
            <person name="Cui L."/>
            <person name="Oguchi A."/>
            <person name="Aoki K."/>
            <person name="Nagai Y."/>
            <person name="Lian J.-Q."/>
            <person name="Ito T."/>
            <person name="Kanamori M."/>
            <person name="Matsumaru H."/>
            <person name="Maruyama A."/>
            <person name="Murakami H."/>
            <person name="Hosoyama A."/>
            <person name="Mizutani-Ui Y."/>
            <person name="Takahashi N.K."/>
            <person name="Sawano T."/>
            <person name="Inoue R."/>
            <person name="Kaito C."/>
            <person name="Sekimizu K."/>
            <person name="Hirakawa H."/>
            <person name="Kuhara S."/>
            <person name="Goto S."/>
            <person name="Yabuzaki J."/>
            <person name="Kanehisa M."/>
            <person name="Yamashita A."/>
            <person name="Oshima K."/>
            <person name="Furuya K."/>
            <person name="Yoshino C."/>
            <person name="Shiba T."/>
            <person name="Hattori M."/>
            <person name="Ogasawara N."/>
            <person name="Hayashi H."/>
            <person name="Hiramatsu K."/>
        </authorList>
    </citation>
    <scope>NUCLEOTIDE SEQUENCE [LARGE SCALE GENOMIC DNA]</scope>
    <source>
        <strain>N315</strain>
    </source>
</reference>
<reference key="3">
    <citation type="journal article" date="2005" name="J. Microbiol. Methods">
        <title>Correlation of proteomic and transcriptomic profiles of Staphylococcus aureus during the post-exponential phase of growth.</title>
        <authorList>
            <person name="Scherl A."/>
            <person name="Francois P."/>
            <person name="Bento M."/>
            <person name="Deshusses J.M."/>
            <person name="Charbonnier Y."/>
            <person name="Converset V."/>
            <person name="Huyghe A."/>
            <person name="Walter N."/>
            <person name="Hoogland C."/>
            <person name="Appel R.D."/>
            <person name="Sanchez J.-C."/>
            <person name="Zimmermann-Ivol C.G."/>
            <person name="Corthals G.L."/>
            <person name="Hochstrasser D.F."/>
            <person name="Schrenzel J."/>
        </authorList>
    </citation>
    <scope>IDENTIFICATION BY MASS SPECTROMETRY</scope>
    <source>
        <strain>N315</strain>
    </source>
</reference>
<reference key="4">
    <citation type="submission" date="2007-10" db="UniProtKB">
        <title>Shotgun proteomic analysis of total and membrane protein extracts of S. aureus strain N315.</title>
        <authorList>
            <person name="Vaezzadeh A.R."/>
            <person name="Deshusses J."/>
            <person name="Lescuyer P."/>
            <person name="Hochstrasser D.F."/>
        </authorList>
    </citation>
    <scope>IDENTIFICATION BY MASS SPECTROMETRY [LARGE SCALE ANALYSIS]</scope>
    <source>
        <strain>N315</strain>
    </source>
</reference>
<comment type="function">
    <text evidence="1">Catalyzes the NADPH-dependent reduction of beta-ketoacyl-ACP substrates to beta-hydroxyacyl-ACP products, the first reductive step in the elongation cycle of fatty acid biosynthesis.</text>
</comment>
<comment type="catalytic activity">
    <reaction>
        <text>a (3R)-hydroxyacyl-[ACP] + NADP(+) = a 3-oxoacyl-[ACP] + NADPH + H(+)</text>
        <dbReference type="Rhea" id="RHEA:17397"/>
        <dbReference type="Rhea" id="RHEA-COMP:9916"/>
        <dbReference type="Rhea" id="RHEA-COMP:9945"/>
        <dbReference type="ChEBI" id="CHEBI:15378"/>
        <dbReference type="ChEBI" id="CHEBI:57783"/>
        <dbReference type="ChEBI" id="CHEBI:58349"/>
        <dbReference type="ChEBI" id="CHEBI:78776"/>
        <dbReference type="ChEBI" id="CHEBI:78827"/>
        <dbReference type="EC" id="1.1.1.100"/>
    </reaction>
</comment>
<comment type="pathway">
    <text>Lipid metabolism; fatty acid biosynthesis.</text>
</comment>
<comment type="subunit">
    <text evidence="1">Homotetramer.</text>
</comment>
<comment type="similarity">
    <text evidence="3">Belongs to the short-chain dehydrogenases/reductases (SDR) family.</text>
</comment>
<feature type="chain" id="PRO_0000054685" description="3-oxoacyl-[acyl-carrier-protein] reductase FabG">
    <location>
        <begin position="1"/>
        <end position="246"/>
    </location>
</feature>
<feature type="active site" description="Proton acceptor" evidence="2">
    <location>
        <position position="154"/>
    </location>
</feature>
<feature type="binding site" evidence="1">
    <location>
        <begin position="11"/>
        <end position="14"/>
    </location>
    <ligand>
        <name>NADP(+)</name>
        <dbReference type="ChEBI" id="CHEBI:58349"/>
    </ligand>
</feature>
<feature type="binding site" evidence="1">
    <location>
        <begin position="62"/>
        <end position="63"/>
    </location>
    <ligand>
        <name>NADP(+)</name>
        <dbReference type="ChEBI" id="CHEBI:58349"/>
    </ligand>
</feature>
<feature type="binding site" evidence="1">
    <location>
        <position position="89"/>
    </location>
    <ligand>
        <name>NADP(+)</name>
        <dbReference type="ChEBI" id="CHEBI:58349"/>
    </ligand>
</feature>
<feature type="binding site" evidence="1">
    <location>
        <position position="141"/>
    </location>
    <ligand>
        <name>substrate</name>
    </ligand>
</feature>
<feature type="binding site" evidence="1">
    <location>
        <begin position="154"/>
        <end position="158"/>
    </location>
    <ligand>
        <name>NADP(+)</name>
        <dbReference type="ChEBI" id="CHEBI:58349"/>
    </ligand>
</feature>
<feature type="binding site" evidence="1">
    <location>
        <position position="187"/>
    </location>
    <ligand>
        <name>NADP(+)</name>
        <dbReference type="ChEBI" id="CHEBI:58349"/>
    </ligand>
</feature>
<accession>P99093</accession>
<accession>Q99QK7</accession>
<sequence>MKMTKSALVTGASRGIGRSIALQLAEEGYNVAVNYAGSKEKAEAVVEEIKAKGVDSFAIQANVADADEVKAMIKEVVSQFGSLDVLVNNAGITRDNLLMRMKEQEWDDVIDTNLKGVFNCIQKATPQMLRQRSGAIINLSSVVGAVGNPGQANYVATKAGVIGLTKSAARELASRGITVNAVAPGFIVSDMTDALSDELKEQMLTQIPLARFGQDTDIANTVAFLASDKAKYITGQTIHVNGGMYM</sequence>
<keyword id="KW-0275">Fatty acid biosynthesis</keyword>
<keyword id="KW-0276">Fatty acid metabolism</keyword>
<keyword id="KW-0444">Lipid biosynthesis</keyword>
<keyword id="KW-0443">Lipid metabolism</keyword>
<keyword id="KW-0521">NADP</keyword>
<keyword id="KW-0560">Oxidoreductase</keyword>
<organism>
    <name type="scientific">Staphylococcus aureus (strain N315)</name>
    <dbReference type="NCBI Taxonomy" id="158879"/>
    <lineage>
        <taxon>Bacteria</taxon>
        <taxon>Bacillati</taxon>
        <taxon>Bacillota</taxon>
        <taxon>Bacilli</taxon>
        <taxon>Bacillales</taxon>
        <taxon>Staphylococcaceae</taxon>
        <taxon>Staphylococcus</taxon>
    </lineage>
</organism>
<protein>
    <recommendedName>
        <fullName>3-oxoacyl-[acyl-carrier-protein] reductase FabG</fullName>
        <ecNumber>1.1.1.100</ecNumber>
    </recommendedName>
    <alternativeName>
        <fullName>3-ketoacyl-acyl carrier protein reductase</fullName>
    </alternativeName>
    <alternativeName>
        <fullName>Beta-Ketoacyl-acyl carrier protein reductase</fullName>
    </alternativeName>
    <alternativeName>
        <fullName>Beta-ketoacyl-ACP reductase</fullName>
    </alternativeName>
</protein>
<proteinExistence type="evidence at protein level"/>
<dbReference type="EC" id="1.1.1.100"/>
<dbReference type="EMBL" id="D85817">
    <property type="protein sequence ID" value="BAB20935.2"/>
    <property type="molecule type" value="Genomic_DNA"/>
</dbReference>
<dbReference type="EMBL" id="BA000018">
    <property type="protein sequence ID" value="BAB42326.1"/>
    <property type="molecule type" value="Genomic_DNA"/>
</dbReference>
<dbReference type="PIR" id="B89896">
    <property type="entry name" value="B89896"/>
</dbReference>
<dbReference type="SMR" id="P99093"/>
<dbReference type="EnsemblBacteria" id="BAB42326">
    <property type="protein sequence ID" value="BAB42326"/>
    <property type="gene ID" value="BAB42326"/>
</dbReference>
<dbReference type="KEGG" id="sau:SA1074"/>
<dbReference type="HOGENOM" id="CLU_010194_1_3_9"/>
<dbReference type="UniPathway" id="UPA00094"/>
<dbReference type="GO" id="GO:0004316">
    <property type="term" value="F:3-oxoacyl-[acyl-carrier-protein] reductase (NADPH) activity"/>
    <property type="evidence" value="ECO:0000250"/>
    <property type="project" value="UniProtKB"/>
</dbReference>
<dbReference type="GO" id="GO:0051287">
    <property type="term" value="F:NAD binding"/>
    <property type="evidence" value="ECO:0007669"/>
    <property type="project" value="InterPro"/>
</dbReference>
<dbReference type="GO" id="GO:0050661">
    <property type="term" value="F:NADP binding"/>
    <property type="evidence" value="ECO:0000250"/>
    <property type="project" value="UniProtKB"/>
</dbReference>
<dbReference type="GO" id="GO:0030497">
    <property type="term" value="P:fatty acid elongation"/>
    <property type="evidence" value="ECO:0000250"/>
    <property type="project" value="UniProtKB"/>
</dbReference>
<dbReference type="CDD" id="cd05333">
    <property type="entry name" value="BKR_SDR_c"/>
    <property type="match status" value="1"/>
</dbReference>
<dbReference type="FunFam" id="3.40.50.720:FF:000037">
    <property type="entry name" value="3-oxoacyl-[acyl-carrier-protein] reductase FabG"/>
    <property type="match status" value="1"/>
</dbReference>
<dbReference type="Gene3D" id="3.40.50.720">
    <property type="entry name" value="NAD(P)-binding Rossmann-like Domain"/>
    <property type="match status" value="1"/>
</dbReference>
<dbReference type="InterPro" id="IPR011284">
    <property type="entry name" value="3oxo_ACP_reduc"/>
</dbReference>
<dbReference type="InterPro" id="IPR036291">
    <property type="entry name" value="NAD(P)-bd_dom_sf"/>
</dbReference>
<dbReference type="InterPro" id="IPR020904">
    <property type="entry name" value="Sc_DH/Rdtase_CS"/>
</dbReference>
<dbReference type="InterPro" id="IPR050259">
    <property type="entry name" value="SDR"/>
</dbReference>
<dbReference type="InterPro" id="IPR002347">
    <property type="entry name" value="SDR_fam"/>
</dbReference>
<dbReference type="NCBIfam" id="TIGR01830">
    <property type="entry name" value="3oxo_ACP_reduc"/>
    <property type="match status" value="1"/>
</dbReference>
<dbReference type="NCBIfam" id="NF004197">
    <property type="entry name" value="PRK05653.1-1"/>
    <property type="match status" value="1"/>
</dbReference>
<dbReference type="NCBIfam" id="NF004198">
    <property type="entry name" value="PRK05653.1-3"/>
    <property type="match status" value="1"/>
</dbReference>
<dbReference type="NCBIfam" id="NF004199">
    <property type="entry name" value="PRK05653.1-4"/>
    <property type="match status" value="1"/>
</dbReference>
<dbReference type="NCBIfam" id="NF004200">
    <property type="entry name" value="PRK05653.1-5"/>
    <property type="match status" value="1"/>
</dbReference>
<dbReference type="NCBIfam" id="NF005559">
    <property type="entry name" value="PRK07231.1"/>
    <property type="match status" value="1"/>
</dbReference>
<dbReference type="NCBIfam" id="NF009466">
    <property type="entry name" value="PRK12826.1-2"/>
    <property type="match status" value="1"/>
</dbReference>
<dbReference type="PANTHER" id="PTHR42879">
    <property type="entry name" value="3-OXOACYL-(ACYL-CARRIER-PROTEIN) REDUCTASE"/>
    <property type="match status" value="1"/>
</dbReference>
<dbReference type="PANTHER" id="PTHR42879:SF2">
    <property type="entry name" value="3-OXOACYL-[ACYL-CARRIER-PROTEIN] REDUCTASE FABG"/>
    <property type="match status" value="1"/>
</dbReference>
<dbReference type="Pfam" id="PF13561">
    <property type="entry name" value="adh_short_C2"/>
    <property type="match status" value="1"/>
</dbReference>
<dbReference type="PRINTS" id="PR00081">
    <property type="entry name" value="GDHRDH"/>
</dbReference>
<dbReference type="PRINTS" id="PR00080">
    <property type="entry name" value="SDRFAMILY"/>
</dbReference>
<dbReference type="SMART" id="SM00822">
    <property type="entry name" value="PKS_KR"/>
    <property type="match status" value="1"/>
</dbReference>
<dbReference type="SUPFAM" id="SSF51735">
    <property type="entry name" value="NAD(P)-binding Rossmann-fold domains"/>
    <property type="match status" value="1"/>
</dbReference>
<dbReference type="PROSITE" id="PS00061">
    <property type="entry name" value="ADH_SHORT"/>
    <property type="match status" value="1"/>
</dbReference>
<gene>
    <name type="primary">fabG</name>
    <name type="ordered locus">SA1074</name>
</gene>